<proteinExistence type="inferred from homology"/>
<evidence type="ECO:0000250" key="1"/>
<evidence type="ECO:0000305" key="2"/>
<reference key="1">
    <citation type="journal article" date="2002" name="J. Bacteriol.">
        <title>Whole-genome comparison of Mycobacterium tuberculosis clinical and laboratory strains.</title>
        <authorList>
            <person name="Fleischmann R.D."/>
            <person name="Alland D."/>
            <person name="Eisen J.A."/>
            <person name="Carpenter L."/>
            <person name="White O."/>
            <person name="Peterson J.D."/>
            <person name="DeBoy R.T."/>
            <person name="Dodson R.J."/>
            <person name="Gwinn M.L."/>
            <person name="Haft D.H."/>
            <person name="Hickey E.K."/>
            <person name="Kolonay J.F."/>
            <person name="Nelson W.C."/>
            <person name="Umayam L.A."/>
            <person name="Ermolaeva M.D."/>
            <person name="Salzberg S.L."/>
            <person name="Delcher A."/>
            <person name="Utterback T.R."/>
            <person name="Weidman J.F."/>
            <person name="Khouri H.M."/>
            <person name="Gill J."/>
            <person name="Mikula A."/>
            <person name="Bishai W."/>
            <person name="Jacobs W.R. Jr."/>
            <person name="Venter J.C."/>
            <person name="Fraser C.M."/>
        </authorList>
    </citation>
    <scope>NUCLEOTIDE SEQUENCE [LARGE SCALE GENOMIC DNA]</scope>
    <source>
        <strain>CDC 1551 / Oshkosh</strain>
    </source>
</reference>
<dbReference type="EC" id="1.14.-.-"/>
<dbReference type="EMBL" id="AE000516">
    <property type="protein sequence ID" value="AAK44368.1"/>
    <property type="molecule type" value="Genomic_DNA"/>
</dbReference>
<dbReference type="PIR" id="C70616">
    <property type="entry name" value="C70616"/>
</dbReference>
<dbReference type="RefSeq" id="WP_003400938.1">
    <property type="nucleotide sequence ID" value="NZ_KK341227.1"/>
</dbReference>
<dbReference type="SMR" id="P9WPM2"/>
<dbReference type="KEGG" id="mtc:MT0144"/>
<dbReference type="PATRIC" id="fig|83331.31.peg.156"/>
<dbReference type="HOGENOM" id="CLU_001570_5_1_11"/>
<dbReference type="Proteomes" id="UP000001020">
    <property type="component" value="Chromosome"/>
</dbReference>
<dbReference type="GO" id="GO:0020037">
    <property type="term" value="F:heme binding"/>
    <property type="evidence" value="ECO:0007669"/>
    <property type="project" value="InterPro"/>
</dbReference>
<dbReference type="GO" id="GO:0005506">
    <property type="term" value="F:iron ion binding"/>
    <property type="evidence" value="ECO:0007669"/>
    <property type="project" value="InterPro"/>
</dbReference>
<dbReference type="GO" id="GO:0004497">
    <property type="term" value="F:monooxygenase activity"/>
    <property type="evidence" value="ECO:0007669"/>
    <property type="project" value="UniProtKB-KW"/>
</dbReference>
<dbReference type="GO" id="GO:0016705">
    <property type="term" value="F:oxidoreductase activity, acting on paired donors, with incorporation or reduction of molecular oxygen"/>
    <property type="evidence" value="ECO:0007669"/>
    <property type="project" value="InterPro"/>
</dbReference>
<dbReference type="CDD" id="cd11053">
    <property type="entry name" value="CYP110-like"/>
    <property type="match status" value="1"/>
</dbReference>
<dbReference type="Gene3D" id="1.10.630.10">
    <property type="entry name" value="Cytochrome P450"/>
    <property type="match status" value="1"/>
</dbReference>
<dbReference type="InterPro" id="IPR001128">
    <property type="entry name" value="Cyt_P450"/>
</dbReference>
<dbReference type="InterPro" id="IPR017972">
    <property type="entry name" value="Cyt_P450_CS"/>
</dbReference>
<dbReference type="InterPro" id="IPR002401">
    <property type="entry name" value="Cyt_P450_E_grp-I"/>
</dbReference>
<dbReference type="InterPro" id="IPR036396">
    <property type="entry name" value="Cyt_P450_sf"/>
</dbReference>
<dbReference type="InterPro" id="IPR050121">
    <property type="entry name" value="Cytochrome_P450_monoxygenase"/>
</dbReference>
<dbReference type="PANTHER" id="PTHR24305">
    <property type="entry name" value="CYTOCHROME P450"/>
    <property type="match status" value="1"/>
</dbReference>
<dbReference type="PANTHER" id="PTHR24305:SF166">
    <property type="entry name" value="CYTOCHROME P450 12A4, MITOCHONDRIAL-RELATED"/>
    <property type="match status" value="1"/>
</dbReference>
<dbReference type="Pfam" id="PF00067">
    <property type="entry name" value="p450"/>
    <property type="match status" value="1"/>
</dbReference>
<dbReference type="PRINTS" id="PR00463">
    <property type="entry name" value="EP450I"/>
</dbReference>
<dbReference type="PRINTS" id="PR00385">
    <property type="entry name" value="P450"/>
</dbReference>
<dbReference type="SUPFAM" id="SSF48264">
    <property type="entry name" value="Cytochrome P450"/>
    <property type="match status" value="1"/>
</dbReference>
<dbReference type="PROSITE" id="PS00086">
    <property type="entry name" value="CYTOCHROME_P450"/>
    <property type="match status" value="1"/>
</dbReference>
<organism>
    <name type="scientific">Mycobacterium tuberculosis (strain CDC 1551 / Oshkosh)</name>
    <dbReference type="NCBI Taxonomy" id="83331"/>
    <lineage>
        <taxon>Bacteria</taxon>
        <taxon>Bacillati</taxon>
        <taxon>Actinomycetota</taxon>
        <taxon>Actinomycetes</taxon>
        <taxon>Mycobacteriales</taxon>
        <taxon>Mycobacteriaceae</taxon>
        <taxon>Mycobacterium</taxon>
        <taxon>Mycobacterium tuberculosis complex</taxon>
    </lineage>
</organism>
<sequence>MSEVVTAAPAPPVVRLPPAVRGPKLFQGLAFVVSRRRLLGRFVRRYGKAFTANILMYGRVVVVADPQLARQVFTSSPEELGNIQPNLSRMFGSGSVFALDGDDHRRRRRLLAPPFHGKSMKNYETIIEEETLRETANWPQGQAFATLPSMMHITLNAILRAIFGAGGSELDELRRLIPPWVTLGSRLAALPKPKRDYGRLSPWGRLAEWRRQYDTVIDKLIEAERADPNFADRTDVLALMLRSTYDDGSIMSRKDIGDELLTLLAAGHETTAATLGWAFERLSRHPDVLAALVEEVDNGGHELRQAAILEVQRARTVIDFAARRVNPPVYQLGEWVIPRGYSIIINIAQIHGDPDVFPQPDRFDPQRYIGSKPSPFAWIPFGGGTRRCVGAAFANMEMDVVLRTVLRHFTLETTTAAGERSHGRGVAFTPKDGGRVVMRRR</sequence>
<gene>
    <name type="primary">cyp138</name>
    <name type="ordered locus">MT0144</name>
</gene>
<comment type="cofactor">
    <cofactor evidence="1">
        <name>heme</name>
        <dbReference type="ChEBI" id="CHEBI:30413"/>
    </cofactor>
</comment>
<comment type="similarity">
    <text evidence="2">Belongs to the cytochrome P450 family.</text>
</comment>
<name>CP138_MYCTO</name>
<feature type="chain" id="PRO_0000426927" description="Putative cytochrome P450 138">
    <location>
        <begin position="1"/>
        <end position="441"/>
    </location>
</feature>
<feature type="binding site" description="axial binding residue" evidence="1">
    <location>
        <position position="388"/>
    </location>
    <ligand>
        <name>heme</name>
        <dbReference type="ChEBI" id="CHEBI:30413"/>
    </ligand>
    <ligandPart>
        <name>Fe</name>
        <dbReference type="ChEBI" id="CHEBI:18248"/>
    </ligandPart>
</feature>
<keyword id="KW-0349">Heme</keyword>
<keyword id="KW-0408">Iron</keyword>
<keyword id="KW-0479">Metal-binding</keyword>
<keyword id="KW-0503">Monooxygenase</keyword>
<keyword id="KW-0560">Oxidoreductase</keyword>
<keyword id="KW-1185">Reference proteome</keyword>
<accession>P9WPM2</accession>
<accession>L0T5T2</accession>
<accession>P63717</accession>
<accession>P96813</accession>
<protein>
    <recommendedName>
        <fullName>Putative cytochrome P450 138</fullName>
        <ecNumber>1.14.-.-</ecNumber>
    </recommendedName>
</protein>